<keyword id="KW-0472">Membrane</keyword>
<keyword id="KW-1185">Reference proteome</keyword>
<keyword id="KW-0812">Transmembrane</keyword>
<keyword id="KW-1133">Transmembrane helix</keyword>
<organism>
    <name type="scientific">Methanocaldococcus jannaschii (strain ATCC 43067 / DSM 2661 / JAL-1 / JCM 10045 / NBRC 100440)</name>
    <name type="common">Methanococcus jannaschii</name>
    <dbReference type="NCBI Taxonomy" id="243232"/>
    <lineage>
        <taxon>Archaea</taxon>
        <taxon>Methanobacteriati</taxon>
        <taxon>Methanobacteriota</taxon>
        <taxon>Methanomada group</taxon>
        <taxon>Methanococci</taxon>
        <taxon>Methanococcales</taxon>
        <taxon>Methanocaldococcaceae</taxon>
        <taxon>Methanocaldococcus</taxon>
    </lineage>
</organism>
<proteinExistence type="predicted"/>
<gene>
    <name type="ordered locus">MJ1483</name>
</gene>
<comment type="subcellular location">
    <subcellularLocation>
        <location evidence="2">Membrane</location>
        <topology evidence="2">Single-pass membrane protein</topology>
    </subcellularLocation>
</comment>
<dbReference type="EMBL" id="L77117">
    <property type="protein sequence ID" value="AAB99498.1"/>
    <property type="molecule type" value="Genomic_DNA"/>
</dbReference>
<dbReference type="PIR" id="B64485">
    <property type="entry name" value="B64485"/>
</dbReference>
<dbReference type="SMR" id="Q58878"/>
<dbReference type="STRING" id="243232.MJ_1483"/>
<dbReference type="PaxDb" id="243232-MJ_1483"/>
<dbReference type="EnsemblBacteria" id="AAB99498">
    <property type="protein sequence ID" value="AAB99498"/>
    <property type="gene ID" value="MJ_1483"/>
</dbReference>
<dbReference type="KEGG" id="mja:MJ_1483"/>
<dbReference type="HOGENOM" id="CLU_1718224_0_0_2"/>
<dbReference type="InParanoid" id="Q58878"/>
<dbReference type="Proteomes" id="UP000000805">
    <property type="component" value="Chromosome"/>
</dbReference>
<dbReference type="GO" id="GO:0016020">
    <property type="term" value="C:membrane"/>
    <property type="evidence" value="ECO:0007669"/>
    <property type="project" value="UniProtKB-SubCell"/>
</dbReference>
<sequence length="152" mass="17659">MINMDKTLSVIVFLISLIIIFGIYFSSSNFSFKKVEINKSTINDFGDENILTFVPEVCDRFYYEKDGFDWERNINNIETVIIGSDAVVIEKGDFNETEILKELIENGYSVESCRGVYYYKNEKALSDRYIIVGNNLIIKANDISGIRWRYLQ</sequence>
<evidence type="ECO:0000255" key="1"/>
<evidence type="ECO:0000305" key="2"/>
<feature type="chain" id="PRO_0000107369" description="Uncharacterized protein MJ1483">
    <location>
        <begin position="1"/>
        <end position="152"/>
    </location>
</feature>
<feature type="transmembrane region" description="Helical" evidence="1">
    <location>
        <begin position="7"/>
        <end position="27"/>
    </location>
</feature>
<reference key="1">
    <citation type="journal article" date="1996" name="Science">
        <title>Complete genome sequence of the methanogenic archaeon, Methanococcus jannaschii.</title>
        <authorList>
            <person name="Bult C.J."/>
            <person name="White O."/>
            <person name="Olsen G.J."/>
            <person name="Zhou L."/>
            <person name="Fleischmann R.D."/>
            <person name="Sutton G.G."/>
            <person name="Blake J.A."/>
            <person name="FitzGerald L.M."/>
            <person name="Clayton R.A."/>
            <person name="Gocayne J.D."/>
            <person name="Kerlavage A.R."/>
            <person name="Dougherty B.A."/>
            <person name="Tomb J.-F."/>
            <person name="Adams M.D."/>
            <person name="Reich C.I."/>
            <person name="Overbeek R."/>
            <person name="Kirkness E.F."/>
            <person name="Weinstock K.G."/>
            <person name="Merrick J.M."/>
            <person name="Glodek A."/>
            <person name="Scott J.L."/>
            <person name="Geoghagen N.S.M."/>
            <person name="Weidman J.F."/>
            <person name="Fuhrmann J.L."/>
            <person name="Nguyen D."/>
            <person name="Utterback T.R."/>
            <person name="Kelley J.M."/>
            <person name="Peterson J.D."/>
            <person name="Sadow P.W."/>
            <person name="Hanna M.C."/>
            <person name="Cotton M.D."/>
            <person name="Roberts K.M."/>
            <person name="Hurst M.A."/>
            <person name="Kaine B.P."/>
            <person name="Borodovsky M."/>
            <person name="Klenk H.-P."/>
            <person name="Fraser C.M."/>
            <person name="Smith H.O."/>
            <person name="Woese C.R."/>
            <person name="Venter J.C."/>
        </authorList>
    </citation>
    <scope>NUCLEOTIDE SEQUENCE [LARGE SCALE GENOMIC DNA]</scope>
    <source>
        <strain>ATCC 43067 / DSM 2661 / JAL-1 / JCM 10045 / NBRC 100440</strain>
    </source>
</reference>
<accession>Q58878</accession>
<protein>
    <recommendedName>
        <fullName>Uncharacterized protein MJ1483</fullName>
    </recommendedName>
</protein>
<name>Y1483_METJA</name>